<comment type="function">
    <text evidence="1">May play a role in DNA repair. It seems to be involved in an RecBC-independent recombinational process of DNA repair. It may act with RecF and RecO.</text>
</comment>
<comment type="similarity">
    <text evidence="1">Belongs to the RecR family.</text>
</comment>
<gene>
    <name evidence="1" type="primary">recR</name>
    <name type="ordered locus">FTT_0809c</name>
</gene>
<evidence type="ECO:0000255" key="1">
    <source>
        <dbReference type="HAMAP-Rule" id="MF_00017"/>
    </source>
</evidence>
<feature type="chain" id="PRO_0000190321" description="Recombination protein RecR">
    <location>
        <begin position="1"/>
        <end position="200"/>
    </location>
</feature>
<feature type="domain" description="Toprim" evidence="1">
    <location>
        <begin position="83"/>
        <end position="177"/>
    </location>
</feature>
<feature type="zinc finger region" description="C4-type" evidence="1">
    <location>
        <begin position="60"/>
        <end position="75"/>
    </location>
</feature>
<sequence>MTSKIFSPKISAVIESLRKLPTIGKKSSQRLALYLLDKSPETAIAIANSLLDATANIKKCVYCQALTEDDVCNICSNTNRDNTKLCIIESMLDMIAIEEAGIYRGKYFVLNGRISPLDGIGPSELKLDILQQIIADRKIDEVILAISPTVEGETTAHFISQMIAKDIKISRIGFGVPFGGELEYLDQQTLLHAFNARTNI</sequence>
<dbReference type="EMBL" id="AJ749949">
    <property type="protein sequence ID" value="CAG45442.1"/>
    <property type="molecule type" value="Genomic_DNA"/>
</dbReference>
<dbReference type="RefSeq" id="WP_003020731.1">
    <property type="nucleotide sequence ID" value="NC_006570.2"/>
</dbReference>
<dbReference type="RefSeq" id="YP_169816.1">
    <property type="nucleotide sequence ID" value="NC_006570.2"/>
</dbReference>
<dbReference type="SMR" id="Q5NGM6"/>
<dbReference type="IntAct" id="Q5NGM6">
    <property type="interactions" value="4"/>
</dbReference>
<dbReference type="STRING" id="177416.FTT_0809c"/>
<dbReference type="DNASU" id="3191634"/>
<dbReference type="EnsemblBacteria" id="CAG45442">
    <property type="protein sequence ID" value="CAG45442"/>
    <property type="gene ID" value="FTT_0809c"/>
</dbReference>
<dbReference type="KEGG" id="ftu:FTT_0809c"/>
<dbReference type="eggNOG" id="COG0353">
    <property type="taxonomic scope" value="Bacteria"/>
</dbReference>
<dbReference type="OrthoDB" id="9802672at2"/>
<dbReference type="Proteomes" id="UP000001174">
    <property type="component" value="Chromosome"/>
</dbReference>
<dbReference type="GO" id="GO:0003677">
    <property type="term" value="F:DNA binding"/>
    <property type="evidence" value="ECO:0007669"/>
    <property type="project" value="UniProtKB-UniRule"/>
</dbReference>
<dbReference type="GO" id="GO:0008270">
    <property type="term" value="F:zinc ion binding"/>
    <property type="evidence" value="ECO:0007669"/>
    <property type="project" value="UniProtKB-KW"/>
</dbReference>
<dbReference type="GO" id="GO:0006310">
    <property type="term" value="P:DNA recombination"/>
    <property type="evidence" value="ECO:0007669"/>
    <property type="project" value="UniProtKB-UniRule"/>
</dbReference>
<dbReference type="GO" id="GO:0006281">
    <property type="term" value="P:DNA repair"/>
    <property type="evidence" value="ECO:0007669"/>
    <property type="project" value="UniProtKB-UniRule"/>
</dbReference>
<dbReference type="CDD" id="cd01025">
    <property type="entry name" value="TOPRIM_recR"/>
    <property type="match status" value="1"/>
</dbReference>
<dbReference type="Gene3D" id="3.40.1360.10">
    <property type="match status" value="1"/>
</dbReference>
<dbReference type="Gene3D" id="6.10.250.240">
    <property type="match status" value="1"/>
</dbReference>
<dbReference type="Gene3D" id="1.10.8.420">
    <property type="entry name" value="RecR Domain 1"/>
    <property type="match status" value="1"/>
</dbReference>
<dbReference type="HAMAP" id="MF_00017">
    <property type="entry name" value="RecR"/>
    <property type="match status" value="1"/>
</dbReference>
<dbReference type="InterPro" id="IPR000093">
    <property type="entry name" value="DNA_Rcmb_RecR"/>
</dbReference>
<dbReference type="InterPro" id="IPR023627">
    <property type="entry name" value="Rcmb_RecR"/>
</dbReference>
<dbReference type="InterPro" id="IPR015967">
    <property type="entry name" value="Rcmb_RecR_Znf"/>
</dbReference>
<dbReference type="InterPro" id="IPR006171">
    <property type="entry name" value="TOPRIM_dom"/>
</dbReference>
<dbReference type="InterPro" id="IPR034137">
    <property type="entry name" value="TOPRIM_RecR"/>
</dbReference>
<dbReference type="NCBIfam" id="TIGR00615">
    <property type="entry name" value="recR"/>
    <property type="match status" value="1"/>
</dbReference>
<dbReference type="PANTHER" id="PTHR30446">
    <property type="entry name" value="RECOMBINATION PROTEIN RECR"/>
    <property type="match status" value="1"/>
</dbReference>
<dbReference type="PANTHER" id="PTHR30446:SF0">
    <property type="entry name" value="RECOMBINATION PROTEIN RECR"/>
    <property type="match status" value="1"/>
</dbReference>
<dbReference type="Pfam" id="PF21175">
    <property type="entry name" value="RecR_C"/>
    <property type="match status" value="1"/>
</dbReference>
<dbReference type="Pfam" id="PF21176">
    <property type="entry name" value="RecR_HhH"/>
    <property type="match status" value="1"/>
</dbReference>
<dbReference type="Pfam" id="PF02132">
    <property type="entry name" value="RecR_ZnF"/>
    <property type="match status" value="1"/>
</dbReference>
<dbReference type="Pfam" id="PF13662">
    <property type="entry name" value="Toprim_4"/>
    <property type="match status" value="1"/>
</dbReference>
<dbReference type="SMART" id="SM00493">
    <property type="entry name" value="TOPRIM"/>
    <property type="match status" value="1"/>
</dbReference>
<dbReference type="SUPFAM" id="SSF111304">
    <property type="entry name" value="Recombination protein RecR"/>
    <property type="match status" value="1"/>
</dbReference>
<dbReference type="PROSITE" id="PS01300">
    <property type="entry name" value="RECR"/>
    <property type="match status" value="1"/>
</dbReference>
<dbReference type="PROSITE" id="PS50880">
    <property type="entry name" value="TOPRIM"/>
    <property type="match status" value="1"/>
</dbReference>
<proteinExistence type="inferred from homology"/>
<accession>Q5NGM6</accession>
<protein>
    <recommendedName>
        <fullName evidence="1">Recombination protein RecR</fullName>
    </recommendedName>
</protein>
<organism>
    <name type="scientific">Francisella tularensis subsp. tularensis (strain SCHU S4 / Schu 4)</name>
    <dbReference type="NCBI Taxonomy" id="177416"/>
    <lineage>
        <taxon>Bacteria</taxon>
        <taxon>Pseudomonadati</taxon>
        <taxon>Pseudomonadota</taxon>
        <taxon>Gammaproteobacteria</taxon>
        <taxon>Thiotrichales</taxon>
        <taxon>Francisellaceae</taxon>
        <taxon>Francisella</taxon>
    </lineage>
</organism>
<reference key="1">
    <citation type="journal article" date="2005" name="Nat. Genet.">
        <title>The complete genome sequence of Francisella tularensis, the causative agent of tularemia.</title>
        <authorList>
            <person name="Larsson P."/>
            <person name="Oyston P.C.F."/>
            <person name="Chain P."/>
            <person name="Chu M.C."/>
            <person name="Duffield M."/>
            <person name="Fuxelius H.-H."/>
            <person name="Garcia E."/>
            <person name="Haelltorp G."/>
            <person name="Johansson D."/>
            <person name="Isherwood K.E."/>
            <person name="Karp P.D."/>
            <person name="Larsson E."/>
            <person name="Liu Y."/>
            <person name="Michell S."/>
            <person name="Prior J."/>
            <person name="Prior R."/>
            <person name="Malfatti S."/>
            <person name="Sjoestedt A."/>
            <person name="Svensson K."/>
            <person name="Thompson N."/>
            <person name="Vergez L."/>
            <person name="Wagg J.K."/>
            <person name="Wren B.W."/>
            <person name="Lindler L.E."/>
            <person name="Andersson S.G.E."/>
            <person name="Forsman M."/>
            <person name="Titball R.W."/>
        </authorList>
    </citation>
    <scope>NUCLEOTIDE SEQUENCE [LARGE SCALE GENOMIC DNA]</scope>
    <source>
        <strain>SCHU S4 / Schu 4</strain>
    </source>
</reference>
<keyword id="KW-0227">DNA damage</keyword>
<keyword id="KW-0233">DNA recombination</keyword>
<keyword id="KW-0234">DNA repair</keyword>
<keyword id="KW-0479">Metal-binding</keyword>
<keyword id="KW-1185">Reference proteome</keyword>
<keyword id="KW-0862">Zinc</keyword>
<keyword id="KW-0863">Zinc-finger</keyword>
<name>RECR_FRATT</name>